<dbReference type="EMBL" id="AJ290947">
    <property type="protein sequence ID" value="CAC03620.1"/>
    <property type="molecule type" value="mRNA"/>
</dbReference>
<dbReference type="EMBL" id="BC087919">
    <property type="protein sequence ID" value="AAH87919.1"/>
    <property type="molecule type" value="mRNA"/>
</dbReference>
<dbReference type="CCDS" id="CCDS38014.1"/>
<dbReference type="RefSeq" id="NP_075700.2">
    <property type="nucleotide sequence ID" value="NM_023211.5"/>
</dbReference>
<dbReference type="SMR" id="Q78IK2"/>
<dbReference type="BioGRID" id="211501">
    <property type="interactions" value="30"/>
</dbReference>
<dbReference type="FunCoup" id="Q78IK2">
    <property type="interactions" value="893"/>
</dbReference>
<dbReference type="IntAct" id="Q78IK2">
    <property type="interactions" value="5"/>
</dbReference>
<dbReference type="STRING" id="10090.ENSMUSP00000158561"/>
<dbReference type="GlyGen" id="Q78IK2">
    <property type="glycosylation" value="1 site, 1 O-linked glycan (1 site)"/>
</dbReference>
<dbReference type="iPTMnet" id="Q78IK2"/>
<dbReference type="PhosphoSitePlus" id="Q78IK2"/>
<dbReference type="SwissPalm" id="Q78IK2"/>
<dbReference type="jPOST" id="Q78IK2"/>
<dbReference type="PaxDb" id="10090-ENSMUSP00000093713"/>
<dbReference type="PeptideAtlas" id="Q78IK2"/>
<dbReference type="ProteomicsDB" id="300202"/>
<dbReference type="Pumba" id="Q78IK2"/>
<dbReference type="TopDownProteomics" id="Q78IK2"/>
<dbReference type="Antibodypedia" id="46057">
    <property type="antibodies" value="72 antibodies from 15 providers"/>
</dbReference>
<dbReference type="Ensembl" id="ENSMUST00000096014.5">
    <property type="protein sequence ID" value="ENSMUSP00000093713.4"/>
    <property type="gene ID" value="ENSMUSG00000071528.5"/>
</dbReference>
<dbReference type="Ensembl" id="ENSMUST00000235771.2">
    <property type="protein sequence ID" value="ENSMUSP00000158561.2"/>
    <property type="gene ID" value="ENSMUSG00000071528.5"/>
</dbReference>
<dbReference type="Ensembl" id="ENSMUST00000236170.2">
    <property type="protein sequence ID" value="ENSMUSP00000158514.2"/>
    <property type="gene ID" value="ENSMUSG00000071528.5"/>
</dbReference>
<dbReference type="Ensembl" id="ENSMUST00000237720.2">
    <property type="protein sequence ID" value="ENSMUSP00000157712.2"/>
    <property type="gene ID" value="ENSMUSG00000071528.5"/>
</dbReference>
<dbReference type="GeneID" id="66477"/>
<dbReference type="KEGG" id="mmu:66477"/>
<dbReference type="UCSC" id="uc008huo.1">
    <property type="organism name" value="mouse"/>
</dbReference>
<dbReference type="AGR" id="MGI:1891435"/>
<dbReference type="CTD" id="84833"/>
<dbReference type="MGI" id="MGI:1891435">
    <property type="gene designation" value="Atp5mk"/>
</dbReference>
<dbReference type="VEuPathDB" id="HostDB:ENSMUSG00000071528"/>
<dbReference type="eggNOG" id="ENOG502S82X">
    <property type="taxonomic scope" value="Eukaryota"/>
</dbReference>
<dbReference type="GeneTree" id="ENSGT00390000015489"/>
<dbReference type="HOGENOM" id="CLU_209345_1_0_1"/>
<dbReference type="InParanoid" id="Q78IK2"/>
<dbReference type="OMA" id="GIAKHFN"/>
<dbReference type="OrthoDB" id="9435504at2759"/>
<dbReference type="PhylomeDB" id="Q78IK2"/>
<dbReference type="TreeFam" id="TF324671"/>
<dbReference type="Reactome" id="R-MMU-163210">
    <property type="pathway name" value="Formation of ATP by chemiosmotic coupling"/>
</dbReference>
<dbReference type="Reactome" id="R-MMU-8949613">
    <property type="pathway name" value="Cristae formation"/>
</dbReference>
<dbReference type="BioGRID-ORCS" id="66477">
    <property type="hits" value="4 hits in 44 CRISPR screens"/>
</dbReference>
<dbReference type="CD-CODE" id="CE726F99">
    <property type="entry name" value="Postsynaptic density"/>
</dbReference>
<dbReference type="ChiTaRS" id="Atp5md">
    <property type="organism name" value="mouse"/>
</dbReference>
<dbReference type="PRO" id="PR:Q78IK2"/>
<dbReference type="Proteomes" id="UP000000589">
    <property type="component" value="Chromosome 19"/>
</dbReference>
<dbReference type="RNAct" id="Q78IK2">
    <property type="molecule type" value="protein"/>
</dbReference>
<dbReference type="Bgee" id="ENSMUSG00000071528">
    <property type="expression patterns" value="Expressed in right kidney and 250 other cell types or tissues"/>
</dbReference>
<dbReference type="GO" id="GO:0005743">
    <property type="term" value="C:mitochondrial inner membrane"/>
    <property type="evidence" value="ECO:0007005"/>
    <property type="project" value="MGI"/>
</dbReference>
<dbReference type="GO" id="GO:0005739">
    <property type="term" value="C:mitochondrion"/>
    <property type="evidence" value="ECO:0000314"/>
    <property type="project" value="UniProtKB"/>
</dbReference>
<dbReference type="GO" id="GO:0045259">
    <property type="term" value="C:proton-transporting ATP synthase complex"/>
    <property type="evidence" value="ECO:0000250"/>
    <property type="project" value="UniProtKB"/>
</dbReference>
<dbReference type="InterPro" id="IPR009125">
    <property type="entry name" value="ATPMK"/>
</dbReference>
<dbReference type="PANTHER" id="PTHR34038">
    <property type="entry name" value="ATP SYNTHASE MEMBRANE SUBUNIT DAPIT, MITOCHONDRIAL"/>
    <property type="match status" value="1"/>
</dbReference>
<dbReference type="PANTHER" id="PTHR34038:SF1">
    <property type="entry name" value="ATP SYNTHASE MEMBRANE SUBUNIT K, MITOCHONDRIAL"/>
    <property type="match status" value="1"/>
</dbReference>
<dbReference type="Pfam" id="PF14960">
    <property type="entry name" value="ATP_synth_reg"/>
    <property type="match status" value="1"/>
</dbReference>
<dbReference type="PRINTS" id="PR01821">
    <property type="entry name" value="DAPIT"/>
</dbReference>
<organism>
    <name type="scientific">Mus musculus</name>
    <name type="common">Mouse</name>
    <dbReference type="NCBI Taxonomy" id="10090"/>
    <lineage>
        <taxon>Eukaryota</taxon>
        <taxon>Metazoa</taxon>
        <taxon>Chordata</taxon>
        <taxon>Craniata</taxon>
        <taxon>Vertebrata</taxon>
        <taxon>Euteleostomi</taxon>
        <taxon>Mammalia</taxon>
        <taxon>Eutheria</taxon>
        <taxon>Euarchontoglires</taxon>
        <taxon>Glires</taxon>
        <taxon>Rodentia</taxon>
        <taxon>Myomorpha</taxon>
        <taxon>Muroidea</taxon>
        <taxon>Muridae</taxon>
        <taxon>Murinae</taxon>
        <taxon>Mus</taxon>
        <taxon>Mus</taxon>
    </lineage>
</organism>
<feature type="chain" id="PRO_0000231579" description="ATP synthase F(0) complex subunit k, mitochondrial">
    <location>
        <begin position="1"/>
        <end position="58"/>
    </location>
</feature>
<feature type="transmembrane region" description="Helical" evidence="4">
    <location>
        <begin position="23"/>
        <end position="45"/>
    </location>
</feature>
<feature type="modified residue" description="N6-acetyllysine" evidence="7">
    <location>
        <position position="16"/>
    </location>
</feature>
<feature type="modified residue" description="N6-acetyllysine" evidence="7">
    <location>
        <position position="17"/>
    </location>
</feature>
<feature type="sequence conflict" description="In Ref. 1; CAC03620." evidence="5" ref="1">
    <original>E</original>
    <variation>K</variation>
    <location>
        <position position="5"/>
    </location>
</feature>
<feature type="sequence conflict" description="In Ref. 1; CAC03620." evidence="5" ref="1">
    <original>R</original>
    <variation>K</variation>
    <location>
        <position position="27"/>
    </location>
</feature>
<feature type="sequence conflict" description="In Ref. 1; CAC03620." evidence="5" ref="1">
    <original>V</original>
    <variation>A</variation>
    <location>
        <position position="55"/>
    </location>
</feature>
<feature type="sequence conflict" description="In Ref. 1; CAC03620." evidence="5" ref="1">
    <original>T</original>
    <variation>TMDFEMSDLTC</variation>
    <location>
        <position position="58"/>
    </location>
</feature>
<reference key="1">
    <citation type="submission" date="2000-05" db="EMBL/GenBank/DDBJ databases">
        <title>Isolation and characterisation of genes expressed in response to active stretch of skeletal muscle.</title>
        <authorList>
            <person name="Sadusky T.J."/>
            <person name="Kemp T.J."/>
        </authorList>
    </citation>
    <scope>NUCLEOTIDE SEQUENCE [MRNA]</scope>
    <source>
        <strain>C57BL/10</strain>
        <tissue>Skeletal muscle</tissue>
    </source>
</reference>
<reference key="2">
    <citation type="journal article" date="2004" name="Genome Res.">
        <title>The status, quality, and expansion of the NIH full-length cDNA project: the Mammalian Gene Collection (MGC).</title>
        <authorList>
            <consortium name="The MGC Project Team"/>
        </authorList>
    </citation>
    <scope>NUCLEOTIDE SEQUENCE [LARGE SCALE MRNA]</scope>
    <source>
        <tissue>Brain</tissue>
    </source>
</reference>
<reference key="3">
    <citation type="journal article" date="2010" name="Cell">
        <title>A tissue-specific atlas of mouse protein phosphorylation and expression.</title>
        <authorList>
            <person name="Huttlin E.L."/>
            <person name="Jedrychowski M.P."/>
            <person name="Elias J.E."/>
            <person name="Goswami T."/>
            <person name="Rad R."/>
            <person name="Beausoleil S.A."/>
            <person name="Villen J."/>
            <person name="Haas W."/>
            <person name="Sowa M.E."/>
            <person name="Gygi S.P."/>
        </authorList>
    </citation>
    <scope>IDENTIFICATION BY MASS SPECTROMETRY [LARGE SCALE ANALYSIS]</scope>
    <source>
        <tissue>Brain</tissue>
        <tissue>Brown adipose tissue</tissue>
        <tissue>Heart</tissue>
        <tissue>Kidney</tissue>
        <tissue>Liver</tissue>
        <tissue>Pancreas</tissue>
        <tissue>Spleen</tissue>
        <tissue>Testis</tissue>
    </source>
</reference>
<reference key="4">
    <citation type="journal article" date="2013" name="Proc. Natl. Acad. Sci. U.S.A.">
        <title>Label-free quantitative proteomics of the lysine acetylome in mitochondria identifies substrates of SIRT3 in metabolic pathways.</title>
        <authorList>
            <person name="Rardin M.J."/>
            <person name="Newman J.C."/>
            <person name="Held J.M."/>
            <person name="Cusack M.P."/>
            <person name="Sorensen D.J."/>
            <person name="Li B."/>
            <person name="Schilling B."/>
            <person name="Mooney S.D."/>
            <person name="Kahn C.R."/>
            <person name="Verdin E."/>
            <person name="Gibson B.W."/>
        </authorList>
    </citation>
    <scope>ACETYLATION [LARGE SCALE ANALYSIS] AT LYS-16 AND LYS-17</scope>
    <scope>IDENTIFICATION BY MASS SPECTROMETRY [LARGE SCALE ANALYSIS]</scope>
    <source>
        <tissue>Liver</tissue>
    </source>
</reference>
<gene>
    <name evidence="3" type="primary">Atp5mk</name>
    <name evidence="6" type="synonym">Atp5md</name>
    <name type="synonym">Dapit</name>
    <name type="synonym">Usmg5</name>
</gene>
<proteinExistence type="evidence at protein level"/>
<comment type="function">
    <text evidence="1 2 3">Subunit k, of the mitochondrial membrane ATP synthase complex (F(1)F(0) ATP synthase or Complex V) that produces ATP from ADP in the presence of a proton gradient across the membrane which is generated by electron transport complexes of the respiratory chain (By similarity). ATP synthase complex consist of a soluble F(1) head domain - the catalytic core - and a membrane F(1) domain - the membrane proton channel. These two domains are linked by a central stalk rotating inside the F(1) region and a stationary peripheral stalk (By similarity). During catalysis, ATP synthesis in the catalytic domain of F(1) is coupled via a rotary mechanism of the central stalk subunits to proton translocation (By similarity). In vivo, can only synthesize ATP although its ATP hydrolase activity can be activated artificially in vitro (By similarity). Part of the complex F(0) domain (By similarity). Required for dimerization of the ATP synthase complex and as such regulates ATP synthesis in the mitochondria (By similarity).</text>
</comment>
<comment type="subunit">
    <text evidence="2 3">Component of the ATP synthase complex composed at least of ATP5F1A/subunit alpha, ATP5F1B/subunit beta, ATP5MC1/subunit c (homooctomer), MT-ATP6/subunit a, MT-ATP8/subunit 8, ATP5ME/subunit e, ATP5MF/subunit f, ATP5MG/subunit g, ATP5MK/subunit k, ATP5MJ/subunit j, ATP5F1C/subunit gamma, ATP5F1D/subunit delta, ATP5F1E/subunit epsilon, ATP5PF/subunit F6, ATP5PB/subunit b, ATP5PD/subunit d, ATP5PO/subunit OSCP. ATP synthase complex consists of a soluble F(1) head domain (subunits alpha(3) and beta(3)) - the catalytic core - and a membrane F(0) domain - the membrane proton channel (subunits c, a, 8, e, f, g, k and j). These two domains are linked by a central stalk (subunits gamma, delta, and epsilon) rotating inside the F1 region and a stationary peripheral stalk (subunits F6, b, d, and OSCP) (By similarity). The ATP synthase complex/complex V exists as a monomeric and a dimeric supercomplex that helps shape mitochondrial cristae to optimize proton flow (By similarity).</text>
</comment>
<comment type="subcellular location">
    <subcellularLocation>
        <location evidence="3">Mitochondrion membrane</location>
        <topology evidence="4">Single-pass membrane protein</topology>
    </subcellularLocation>
</comment>
<protein>
    <recommendedName>
        <fullName evidence="5">ATP synthase F(0) complex subunit k, mitochondrial</fullName>
    </recommendedName>
    <alternativeName>
        <fullName evidence="5">ATP synthase membrane subunit DAPIT, mitochondrial</fullName>
    </alternativeName>
    <alternativeName>
        <fullName>Diabetes-associated protein in insulin-sensitive tissues</fullName>
    </alternativeName>
    <alternativeName>
        <fullName evidence="5">Up-regulated during skeletal muscle growth protein 5</fullName>
    </alternativeName>
</protein>
<name>ATPMK_MOUSE</name>
<evidence type="ECO:0000250" key="1">
    <source>
        <dbReference type="UniProtKB" id="P19483"/>
    </source>
</evidence>
<evidence type="ECO:0000250" key="2">
    <source>
        <dbReference type="UniProtKB" id="Q3ZBI7"/>
    </source>
</evidence>
<evidence type="ECO:0000250" key="3">
    <source>
        <dbReference type="UniProtKB" id="Q96IX5"/>
    </source>
</evidence>
<evidence type="ECO:0000255" key="4"/>
<evidence type="ECO:0000305" key="5"/>
<evidence type="ECO:0000312" key="6">
    <source>
        <dbReference type="MGI" id="MGI:1891435"/>
    </source>
</evidence>
<evidence type="ECO:0007744" key="7">
    <source>
    </source>
</evidence>
<keyword id="KW-0007">Acetylation</keyword>
<keyword id="KW-0472">Membrane</keyword>
<keyword id="KW-0496">Mitochondrion</keyword>
<keyword id="KW-1185">Reference proteome</keyword>
<keyword id="KW-0812">Transmembrane</keyword>
<keyword id="KW-1133">Transmembrane helix</keyword>
<accession>Q78IK2</accession>
<accession>Q9ER48</accession>
<sequence length="58" mass="6382">MAGAESDGQFQFTGIKKYFNSYTLTGRMNCVLATYGGIALLVLYFKLRPKKTPAVKAT</sequence>